<proteinExistence type="inferred from homology"/>
<accession>Q48KS5</accession>
<dbReference type="EC" id="4.3.2.3" evidence="1"/>
<dbReference type="EMBL" id="CP000058">
    <property type="protein sequence ID" value="AAZ35025.1"/>
    <property type="molecule type" value="Genomic_DNA"/>
</dbReference>
<dbReference type="RefSeq" id="WP_004643995.1">
    <property type="nucleotide sequence ID" value="NC_005773.3"/>
</dbReference>
<dbReference type="SMR" id="Q48KS5"/>
<dbReference type="KEGG" id="psp:PSPPH_1766"/>
<dbReference type="eggNOG" id="COG3194">
    <property type="taxonomic scope" value="Bacteria"/>
</dbReference>
<dbReference type="HOGENOM" id="CLU_070848_1_0_6"/>
<dbReference type="UniPathway" id="UPA00395"/>
<dbReference type="Proteomes" id="UP000000551">
    <property type="component" value="Chromosome"/>
</dbReference>
<dbReference type="GO" id="GO:0004848">
    <property type="term" value="F:ureidoglycolate hydrolase activity"/>
    <property type="evidence" value="ECO:0007669"/>
    <property type="project" value="InterPro"/>
</dbReference>
<dbReference type="GO" id="GO:0050385">
    <property type="term" value="F:ureidoglycolate lyase activity"/>
    <property type="evidence" value="ECO:0007669"/>
    <property type="project" value="UniProtKB-UniRule"/>
</dbReference>
<dbReference type="GO" id="GO:0000256">
    <property type="term" value="P:allantoin catabolic process"/>
    <property type="evidence" value="ECO:0007669"/>
    <property type="project" value="UniProtKB-UniRule"/>
</dbReference>
<dbReference type="GO" id="GO:0006145">
    <property type="term" value="P:purine nucleobase catabolic process"/>
    <property type="evidence" value="ECO:0007669"/>
    <property type="project" value="UniProtKB-UniRule"/>
</dbReference>
<dbReference type="CDD" id="cd20298">
    <property type="entry name" value="cupin_UAH"/>
    <property type="match status" value="1"/>
</dbReference>
<dbReference type="Gene3D" id="2.60.120.480">
    <property type="entry name" value="Ureidoglycolate hydrolase"/>
    <property type="match status" value="1"/>
</dbReference>
<dbReference type="HAMAP" id="MF_00616">
    <property type="entry name" value="Ureidogly_lyase"/>
    <property type="match status" value="1"/>
</dbReference>
<dbReference type="InterPro" id="IPR011051">
    <property type="entry name" value="RmlC_Cupin_sf"/>
</dbReference>
<dbReference type="InterPro" id="IPR047233">
    <property type="entry name" value="UAH_cupin"/>
</dbReference>
<dbReference type="InterPro" id="IPR007247">
    <property type="entry name" value="Ureidogly_lyase"/>
</dbReference>
<dbReference type="InterPro" id="IPR023525">
    <property type="entry name" value="Ureidogly_lyase_bac"/>
</dbReference>
<dbReference type="InterPro" id="IPR024060">
    <property type="entry name" value="Ureidoglycolate_lyase_dom_sf"/>
</dbReference>
<dbReference type="NCBIfam" id="NF002949">
    <property type="entry name" value="PRK03606.1-2"/>
    <property type="match status" value="1"/>
</dbReference>
<dbReference type="NCBIfam" id="NF009932">
    <property type="entry name" value="PRK13395.1"/>
    <property type="match status" value="1"/>
</dbReference>
<dbReference type="PANTHER" id="PTHR21221">
    <property type="entry name" value="UREIDOGLYCOLATE HYDROLASE"/>
    <property type="match status" value="1"/>
</dbReference>
<dbReference type="PANTHER" id="PTHR21221:SF1">
    <property type="entry name" value="UREIDOGLYCOLATE LYASE"/>
    <property type="match status" value="1"/>
</dbReference>
<dbReference type="Pfam" id="PF04115">
    <property type="entry name" value="Ureidogly_lyase"/>
    <property type="match status" value="1"/>
</dbReference>
<dbReference type="PIRSF" id="PIRSF017306">
    <property type="entry name" value="Ureidogly_hydro"/>
    <property type="match status" value="1"/>
</dbReference>
<dbReference type="SUPFAM" id="SSF51182">
    <property type="entry name" value="RmlC-like cupins"/>
    <property type="match status" value="1"/>
</dbReference>
<evidence type="ECO:0000255" key="1">
    <source>
        <dbReference type="HAMAP-Rule" id="MF_00616"/>
    </source>
</evidence>
<comment type="function">
    <text evidence="1">Catalyzes the catabolism of the allantoin degradation intermediate (S)-ureidoglycolate, generating urea and glyoxylate. Involved in the utilization of allantoin as nitrogen source.</text>
</comment>
<comment type="catalytic activity">
    <reaction evidence="1">
        <text>(S)-ureidoglycolate = urea + glyoxylate</text>
        <dbReference type="Rhea" id="RHEA:11304"/>
        <dbReference type="ChEBI" id="CHEBI:16199"/>
        <dbReference type="ChEBI" id="CHEBI:36655"/>
        <dbReference type="ChEBI" id="CHEBI:57296"/>
        <dbReference type="EC" id="4.3.2.3"/>
    </reaction>
</comment>
<comment type="cofactor">
    <cofactor evidence="1">
        <name>Ni(2+)</name>
        <dbReference type="ChEBI" id="CHEBI:49786"/>
    </cofactor>
</comment>
<comment type="pathway">
    <text evidence="1">Nitrogen metabolism; (S)-allantoin degradation.</text>
</comment>
<comment type="subunit">
    <text evidence="1">Homodimer.</text>
</comment>
<comment type="similarity">
    <text evidence="1">Belongs to the ureidoglycolate lyase family.</text>
</comment>
<reference key="1">
    <citation type="journal article" date="2005" name="J. Bacteriol.">
        <title>Whole-genome sequence analysis of Pseudomonas syringae pv. phaseolicola 1448A reveals divergence among pathovars in genes involved in virulence and transposition.</title>
        <authorList>
            <person name="Joardar V."/>
            <person name="Lindeberg M."/>
            <person name="Jackson R.W."/>
            <person name="Selengut J."/>
            <person name="Dodson R."/>
            <person name="Brinkac L.M."/>
            <person name="Daugherty S.C."/>
            <person name="DeBoy R.T."/>
            <person name="Durkin A.S."/>
            <person name="Gwinn Giglio M."/>
            <person name="Madupu R."/>
            <person name="Nelson W.C."/>
            <person name="Rosovitz M.J."/>
            <person name="Sullivan S.A."/>
            <person name="Crabtree J."/>
            <person name="Creasy T."/>
            <person name="Davidsen T.M."/>
            <person name="Haft D.H."/>
            <person name="Zafar N."/>
            <person name="Zhou L."/>
            <person name="Halpin R."/>
            <person name="Holley T."/>
            <person name="Khouri H.M."/>
            <person name="Feldblyum T.V."/>
            <person name="White O."/>
            <person name="Fraser C.M."/>
            <person name="Chatterjee A.K."/>
            <person name="Cartinhour S."/>
            <person name="Schneider D."/>
            <person name="Mansfield J.W."/>
            <person name="Collmer A."/>
            <person name="Buell R."/>
        </authorList>
    </citation>
    <scope>NUCLEOTIDE SEQUENCE [LARGE SCALE GENOMIC DNA]</scope>
    <source>
        <strain>1448A / Race 6</strain>
    </source>
</reference>
<feature type="chain" id="PRO_1000061358" description="Ureidoglycolate lyase">
    <location>
        <begin position="1"/>
        <end position="170"/>
    </location>
</feature>
<organism>
    <name type="scientific">Pseudomonas savastanoi pv. phaseolicola (strain 1448A / Race 6)</name>
    <name type="common">Pseudomonas syringae pv. phaseolicola (strain 1448A / Race 6)</name>
    <dbReference type="NCBI Taxonomy" id="264730"/>
    <lineage>
        <taxon>Bacteria</taxon>
        <taxon>Pseudomonadati</taxon>
        <taxon>Pseudomonadota</taxon>
        <taxon>Gammaproteobacteria</taxon>
        <taxon>Pseudomonadales</taxon>
        <taxon>Pseudomonadaceae</taxon>
        <taxon>Pseudomonas</taxon>
    </lineage>
</organism>
<protein>
    <recommendedName>
        <fullName evidence="1">Ureidoglycolate lyase</fullName>
        <ecNumber evidence="1">4.3.2.3</ecNumber>
    </recommendedName>
    <alternativeName>
        <fullName evidence="1">Ureidoglycolatase</fullName>
    </alternativeName>
</protein>
<gene>
    <name evidence="1" type="primary">allA</name>
    <name type="ordered locus">PSPPH_1766</name>
</gene>
<sequence length="170" mass="18928">MRKLIIEPLTKEAFAPFGDVIETDGSDHFMINNGSTMRFHRLAEVQTAQPDDKAIISIFRAEALPMPLTIGMLERHPQGSQAFIPLLGNPFLIVVAPVGDAPESELTRAFVSNGRQGVNYHRGVWHHPVLTIEKRDDFLVVDRSGEGNNCDEHYFAESQLLVLDPNPLEG</sequence>
<keyword id="KW-0456">Lyase</keyword>
<keyword id="KW-0659">Purine metabolism</keyword>
<name>ALLA_PSE14</name>